<evidence type="ECO:0000255" key="1">
    <source>
        <dbReference type="HAMAP-Rule" id="MF_00151"/>
    </source>
</evidence>
<name>COAD_ECO7I</name>
<comment type="function">
    <text evidence="1">Reversibly transfers an adenylyl group from ATP to 4'-phosphopantetheine, yielding dephospho-CoA (dPCoA) and pyrophosphate.</text>
</comment>
<comment type="catalytic activity">
    <reaction evidence="1">
        <text>(R)-4'-phosphopantetheine + ATP + H(+) = 3'-dephospho-CoA + diphosphate</text>
        <dbReference type="Rhea" id="RHEA:19801"/>
        <dbReference type="ChEBI" id="CHEBI:15378"/>
        <dbReference type="ChEBI" id="CHEBI:30616"/>
        <dbReference type="ChEBI" id="CHEBI:33019"/>
        <dbReference type="ChEBI" id="CHEBI:57328"/>
        <dbReference type="ChEBI" id="CHEBI:61723"/>
        <dbReference type="EC" id="2.7.7.3"/>
    </reaction>
</comment>
<comment type="cofactor">
    <cofactor evidence="1">
        <name>Mg(2+)</name>
        <dbReference type="ChEBI" id="CHEBI:18420"/>
    </cofactor>
</comment>
<comment type="pathway">
    <text evidence="1">Cofactor biosynthesis; coenzyme A biosynthesis; CoA from (R)-pantothenate: step 4/5.</text>
</comment>
<comment type="subunit">
    <text evidence="1">Homohexamer.</text>
</comment>
<comment type="subcellular location">
    <subcellularLocation>
        <location evidence="1">Cytoplasm</location>
    </subcellularLocation>
</comment>
<comment type="similarity">
    <text evidence="1">Belongs to the bacterial CoaD family.</text>
</comment>
<keyword id="KW-0067">ATP-binding</keyword>
<keyword id="KW-0173">Coenzyme A biosynthesis</keyword>
<keyword id="KW-0963">Cytoplasm</keyword>
<keyword id="KW-0460">Magnesium</keyword>
<keyword id="KW-0547">Nucleotide-binding</keyword>
<keyword id="KW-0548">Nucleotidyltransferase</keyword>
<keyword id="KW-0808">Transferase</keyword>
<reference key="1">
    <citation type="journal article" date="2009" name="PLoS Genet.">
        <title>Organised genome dynamics in the Escherichia coli species results in highly diverse adaptive paths.</title>
        <authorList>
            <person name="Touchon M."/>
            <person name="Hoede C."/>
            <person name="Tenaillon O."/>
            <person name="Barbe V."/>
            <person name="Baeriswyl S."/>
            <person name="Bidet P."/>
            <person name="Bingen E."/>
            <person name="Bonacorsi S."/>
            <person name="Bouchier C."/>
            <person name="Bouvet O."/>
            <person name="Calteau A."/>
            <person name="Chiapello H."/>
            <person name="Clermont O."/>
            <person name="Cruveiller S."/>
            <person name="Danchin A."/>
            <person name="Diard M."/>
            <person name="Dossat C."/>
            <person name="Karoui M.E."/>
            <person name="Frapy E."/>
            <person name="Garry L."/>
            <person name="Ghigo J.M."/>
            <person name="Gilles A.M."/>
            <person name="Johnson J."/>
            <person name="Le Bouguenec C."/>
            <person name="Lescat M."/>
            <person name="Mangenot S."/>
            <person name="Martinez-Jehanne V."/>
            <person name="Matic I."/>
            <person name="Nassif X."/>
            <person name="Oztas S."/>
            <person name="Petit M.A."/>
            <person name="Pichon C."/>
            <person name="Rouy Z."/>
            <person name="Ruf C.S."/>
            <person name="Schneider D."/>
            <person name="Tourret J."/>
            <person name="Vacherie B."/>
            <person name="Vallenet D."/>
            <person name="Medigue C."/>
            <person name="Rocha E.P.C."/>
            <person name="Denamur E."/>
        </authorList>
    </citation>
    <scope>NUCLEOTIDE SEQUENCE [LARGE SCALE GENOMIC DNA]</scope>
    <source>
        <strain>IAI39 / ExPEC</strain>
    </source>
</reference>
<proteinExistence type="inferred from homology"/>
<dbReference type="EC" id="2.7.7.3" evidence="1"/>
<dbReference type="EMBL" id="CU928164">
    <property type="protein sequence ID" value="CAR20260.1"/>
    <property type="molecule type" value="Genomic_DNA"/>
</dbReference>
<dbReference type="RefSeq" id="WP_001171871.1">
    <property type="nucleotide sequence ID" value="NC_011750.1"/>
</dbReference>
<dbReference type="RefSeq" id="YP_002410029.1">
    <property type="nucleotide sequence ID" value="NC_011750.1"/>
</dbReference>
<dbReference type="SMR" id="B7NPE0"/>
<dbReference type="STRING" id="585057.ECIAI39_4152"/>
<dbReference type="KEGG" id="ect:ECIAI39_4152"/>
<dbReference type="PATRIC" id="fig|585057.6.peg.4303"/>
<dbReference type="HOGENOM" id="CLU_100149_0_1_6"/>
<dbReference type="UniPathway" id="UPA00241">
    <property type="reaction ID" value="UER00355"/>
</dbReference>
<dbReference type="Proteomes" id="UP000000749">
    <property type="component" value="Chromosome"/>
</dbReference>
<dbReference type="GO" id="GO:0005737">
    <property type="term" value="C:cytoplasm"/>
    <property type="evidence" value="ECO:0007669"/>
    <property type="project" value="UniProtKB-SubCell"/>
</dbReference>
<dbReference type="GO" id="GO:0005524">
    <property type="term" value="F:ATP binding"/>
    <property type="evidence" value="ECO:0007669"/>
    <property type="project" value="UniProtKB-KW"/>
</dbReference>
<dbReference type="GO" id="GO:0004595">
    <property type="term" value="F:pantetheine-phosphate adenylyltransferase activity"/>
    <property type="evidence" value="ECO:0007669"/>
    <property type="project" value="UniProtKB-UniRule"/>
</dbReference>
<dbReference type="GO" id="GO:0015937">
    <property type="term" value="P:coenzyme A biosynthetic process"/>
    <property type="evidence" value="ECO:0007669"/>
    <property type="project" value="UniProtKB-UniRule"/>
</dbReference>
<dbReference type="CDD" id="cd02163">
    <property type="entry name" value="PPAT"/>
    <property type="match status" value="1"/>
</dbReference>
<dbReference type="FunFam" id="3.40.50.620:FF:000012">
    <property type="entry name" value="Phosphopantetheine adenylyltransferase"/>
    <property type="match status" value="1"/>
</dbReference>
<dbReference type="Gene3D" id="3.40.50.620">
    <property type="entry name" value="HUPs"/>
    <property type="match status" value="1"/>
</dbReference>
<dbReference type="HAMAP" id="MF_00151">
    <property type="entry name" value="PPAT_bact"/>
    <property type="match status" value="1"/>
</dbReference>
<dbReference type="InterPro" id="IPR004821">
    <property type="entry name" value="Cyt_trans-like"/>
</dbReference>
<dbReference type="InterPro" id="IPR001980">
    <property type="entry name" value="PPAT"/>
</dbReference>
<dbReference type="InterPro" id="IPR014729">
    <property type="entry name" value="Rossmann-like_a/b/a_fold"/>
</dbReference>
<dbReference type="NCBIfam" id="TIGR01510">
    <property type="entry name" value="coaD_prev_kdtB"/>
    <property type="match status" value="1"/>
</dbReference>
<dbReference type="NCBIfam" id="TIGR00125">
    <property type="entry name" value="cyt_tran_rel"/>
    <property type="match status" value="1"/>
</dbReference>
<dbReference type="PANTHER" id="PTHR21342">
    <property type="entry name" value="PHOSPHOPANTETHEINE ADENYLYLTRANSFERASE"/>
    <property type="match status" value="1"/>
</dbReference>
<dbReference type="PANTHER" id="PTHR21342:SF1">
    <property type="entry name" value="PHOSPHOPANTETHEINE ADENYLYLTRANSFERASE"/>
    <property type="match status" value="1"/>
</dbReference>
<dbReference type="Pfam" id="PF01467">
    <property type="entry name" value="CTP_transf_like"/>
    <property type="match status" value="1"/>
</dbReference>
<dbReference type="PRINTS" id="PR01020">
    <property type="entry name" value="LPSBIOSNTHSS"/>
</dbReference>
<dbReference type="SUPFAM" id="SSF52374">
    <property type="entry name" value="Nucleotidylyl transferase"/>
    <property type="match status" value="1"/>
</dbReference>
<sequence length="159" mass="17911">MQKRAIYPGTFDPITNGHIDIVTRATQMFDHVILAIAASPSKKPMFTLEERVDLAQQATTHLGNVEVVGFSDLMANFARNQHATVLIRGLRAVADFEYEMQLAHMNRHLMPELESVFLMPSKEWSFISSSLVKEVARHQGDVTHFLPENVHQALMAKLA</sequence>
<organism>
    <name type="scientific">Escherichia coli O7:K1 (strain IAI39 / ExPEC)</name>
    <dbReference type="NCBI Taxonomy" id="585057"/>
    <lineage>
        <taxon>Bacteria</taxon>
        <taxon>Pseudomonadati</taxon>
        <taxon>Pseudomonadota</taxon>
        <taxon>Gammaproteobacteria</taxon>
        <taxon>Enterobacterales</taxon>
        <taxon>Enterobacteriaceae</taxon>
        <taxon>Escherichia</taxon>
    </lineage>
</organism>
<feature type="chain" id="PRO_1000118077" description="Phosphopantetheine adenylyltransferase">
    <location>
        <begin position="1"/>
        <end position="159"/>
    </location>
</feature>
<feature type="binding site" evidence="1">
    <location>
        <begin position="10"/>
        <end position="11"/>
    </location>
    <ligand>
        <name>ATP</name>
        <dbReference type="ChEBI" id="CHEBI:30616"/>
    </ligand>
</feature>
<feature type="binding site" evidence="1">
    <location>
        <position position="10"/>
    </location>
    <ligand>
        <name>substrate</name>
    </ligand>
</feature>
<feature type="binding site" evidence="1">
    <location>
        <position position="18"/>
    </location>
    <ligand>
        <name>ATP</name>
        <dbReference type="ChEBI" id="CHEBI:30616"/>
    </ligand>
</feature>
<feature type="binding site" evidence="1">
    <location>
        <position position="42"/>
    </location>
    <ligand>
        <name>substrate</name>
    </ligand>
</feature>
<feature type="binding site" evidence="1">
    <location>
        <position position="74"/>
    </location>
    <ligand>
        <name>substrate</name>
    </ligand>
</feature>
<feature type="binding site" evidence="1">
    <location>
        <position position="88"/>
    </location>
    <ligand>
        <name>substrate</name>
    </ligand>
</feature>
<feature type="binding site" evidence="1">
    <location>
        <begin position="89"/>
        <end position="91"/>
    </location>
    <ligand>
        <name>ATP</name>
        <dbReference type="ChEBI" id="CHEBI:30616"/>
    </ligand>
</feature>
<feature type="binding site" evidence="1">
    <location>
        <position position="99"/>
    </location>
    <ligand>
        <name>ATP</name>
        <dbReference type="ChEBI" id="CHEBI:30616"/>
    </ligand>
</feature>
<feature type="binding site" evidence="1">
    <location>
        <begin position="124"/>
        <end position="130"/>
    </location>
    <ligand>
        <name>ATP</name>
        <dbReference type="ChEBI" id="CHEBI:30616"/>
    </ligand>
</feature>
<feature type="site" description="Transition state stabilizer" evidence="1">
    <location>
        <position position="18"/>
    </location>
</feature>
<protein>
    <recommendedName>
        <fullName evidence="1">Phosphopantetheine adenylyltransferase</fullName>
        <ecNumber evidence="1">2.7.7.3</ecNumber>
    </recommendedName>
    <alternativeName>
        <fullName evidence="1">Dephospho-CoA pyrophosphorylase</fullName>
    </alternativeName>
    <alternativeName>
        <fullName evidence="1">Pantetheine-phosphate adenylyltransferase</fullName>
        <shortName evidence="1">PPAT</shortName>
    </alternativeName>
</protein>
<gene>
    <name evidence="1" type="primary">coaD</name>
    <name type="ordered locus">ECIAI39_4152</name>
</gene>
<accession>B7NPE0</accession>